<keyword id="KW-0028">Amino-acid biosynthesis</keyword>
<keyword id="KW-0057">Aromatic amino acid biosynthesis</keyword>
<keyword id="KW-0274">FAD</keyword>
<keyword id="KW-0285">Flavoprotein</keyword>
<keyword id="KW-0288">FMN</keyword>
<keyword id="KW-0456">Lyase</keyword>
<keyword id="KW-0521">NADP</keyword>
<protein>
    <recommendedName>
        <fullName evidence="1">Chorismate synthase</fullName>
        <shortName evidence="1">CS</shortName>
        <ecNumber evidence="1">4.2.3.5</ecNumber>
    </recommendedName>
    <alternativeName>
        <fullName evidence="1">5-enolpyruvylshikimate-3-phosphate phospholyase</fullName>
    </alternativeName>
</protein>
<reference key="1">
    <citation type="journal article" date="2009" name="Proc. Natl. Acad. Sci. U.S.A.">
        <title>Characterizing a model human gut microbiota composed of members of its two dominant bacterial phyla.</title>
        <authorList>
            <person name="Mahowald M.A."/>
            <person name="Rey F.E."/>
            <person name="Seedorf H."/>
            <person name="Turnbaugh P.J."/>
            <person name="Fulton R.S."/>
            <person name="Wollam A."/>
            <person name="Shah N."/>
            <person name="Wang C."/>
            <person name="Magrini V."/>
            <person name="Wilson R.K."/>
            <person name="Cantarel B.L."/>
            <person name="Coutinho P.M."/>
            <person name="Henrissat B."/>
            <person name="Crock L.W."/>
            <person name="Russell A."/>
            <person name="Verberkmoes N.C."/>
            <person name="Hettich R.L."/>
            <person name="Gordon J.I."/>
        </authorList>
    </citation>
    <scope>NUCLEOTIDE SEQUENCE [LARGE SCALE GENOMIC DNA]</scope>
    <source>
        <strain>ATCC 33656 / DSM 3377 / JCM 17463 / KCTC 5835 / LMG 30912 / VPI 0990</strain>
    </source>
</reference>
<gene>
    <name evidence="1" type="primary">aroC</name>
    <name type="ordered locus">EUBREC_1882</name>
</gene>
<comment type="function">
    <text evidence="1">Catalyzes the anti-1,4-elimination of the C-3 phosphate and the C-6 proR hydrogen from 5-enolpyruvylshikimate-3-phosphate (EPSP) to yield chorismate, which is the branch point compound that serves as the starting substrate for the three terminal pathways of aromatic amino acid biosynthesis. This reaction introduces a second double bond into the aromatic ring system.</text>
</comment>
<comment type="catalytic activity">
    <reaction evidence="1">
        <text>5-O-(1-carboxyvinyl)-3-phosphoshikimate = chorismate + phosphate</text>
        <dbReference type="Rhea" id="RHEA:21020"/>
        <dbReference type="ChEBI" id="CHEBI:29748"/>
        <dbReference type="ChEBI" id="CHEBI:43474"/>
        <dbReference type="ChEBI" id="CHEBI:57701"/>
        <dbReference type="EC" id="4.2.3.5"/>
    </reaction>
</comment>
<comment type="cofactor">
    <cofactor evidence="1">
        <name>FMNH2</name>
        <dbReference type="ChEBI" id="CHEBI:57618"/>
    </cofactor>
    <text evidence="1">Reduced FMN (FMNH(2)).</text>
</comment>
<comment type="pathway">
    <text evidence="1">Metabolic intermediate biosynthesis; chorismate biosynthesis; chorismate from D-erythrose 4-phosphate and phosphoenolpyruvate: step 7/7.</text>
</comment>
<comment type="subunit">
    <text evidence="1">Homotetramer.</text>
</comment>
<comment type="similarity">
    <text evidence="1">Belongs to the chorismate synthase family.</text>
</comment>
<name>AROC_AGARV</name>
<sequence>MAGSSYGNIFKVTTWGESHGKGLGVVVDGVPAGLELCEEDIQIFLNRRKPGQSKFTTPRKEDDTVEILSGVFEGKTTGTPVSMVVWNKNQKSKDYSEIASYYRPGHADFCFDEKYGFRDYRGGGRSSGRETIGRVAAGAIAVKMLSSLGIKFLTYTRSIGPVTINEVNFDAHEIYNNSLYMPDSDAAQKASEYLDECLKSLNSSGGVCECVITGLPVGLGDPVFEKIDANLAKAIMSIGAVKGFEIGDGFDAAKATGLTNNDAFIMMDGAVSKETNHSGGTLGGMTDGSPLIFRAAIKPTPSIAATQHTVNKSGEDIEISIKGRHDPIIVPRAVVVVEAMAAITIADALLMNMGARMDRITDFYKKL</sequence>
<proteinExistence type="inferred from homology"/>
<accession>C4ZAX1</accession>
<evidence type="ECO:0000255" key="1">
    <source>
        <dbReference type="HAMAP-Rule" id="MF_00300"/>
    </source>
</evidence>
<dbReference type="EC" id="4.2.3.5" evidence="1"/>
<dbReference type="EMBL" id="CP001107">
    <property type="protein sequence ID" value="ACR75626.1"/>
    <property type="molecule type" value="Genomic_DNA"/>
</dbReference>
<dbReference type="RefSeq" id="WP_012742723.1">
    <property type="nucleotide sequence ID" value="NC_012781.1"/>
</dbReference>
<dbReference type="SMR" id="C4ZAX1"/>
<dbReference type="STRING" id="515619.EUBREC_1882"/>
<dbReference type="PaxDb" id="515619-EUBREC_1882"/>
<dbReference type="GeneID" id="86988678"/>
<dbReference type="KEGG" id="ere:EUBREC_1882"/>
<dbReference type="HOGENOM" id="CLU_034547_0_2_9"/>
<dbReference type="UniPathway" id="UPA00053">
    <property type="reaction ID" value="UER00090"/>
</dbReference>
<dbReference type="Proteomes" id="UP000001477">
    <property type="component" value="Chromosome"/>
</dbReference>
<dbReference type="GO" id="GO:0005829">
    <property type="term" value="C:cytosol"/>
    <property type="evidence" value="ECO:0007669"/>
    <property type="project" value="TreeGrafter"/>
</dbReference>
<dbReference type="GO" id="GO:0004107">
    <property type="term" value="F:chorismate synthase activity"/>
    <property type="evidence" value="ECO:0007669"/>
    <property type="project" value="UniProtKB-UniRule"/>
</dbReference>
<dbReference type="GO" id="GO:0010181">
    <property type="term" value="F:FMN binding"/>
    <property type="evidence" value="ECO:0007669"/>
    <property type="project" value="TreeGrafter"/>
</dbReference>
<dbReference type="GO" id="GO:0008652">
    <property type="term" value="P:amino acid biosynthetic process"/>
    <property type="evidence" value="ECO:0007669"/>
    <property type="project" value="UniProtKB-KW"/>
</dbReference>
<dbReference type="GO" id="GO:0009073">
    <property type="term" value="P:aromatic amino acid family biosynthetic process"/>
    <property type="evidence" value="ECO:0007669"/>
    <property type="project" value="UniProtKB-KW"/>
</dbReference>
<dbReference type="GO" id="GO:0009423">
    <property type="term" value="P:chorismate biosynthetic process"/>
    <property type="evidence" value="ECO:0007669"/>
    <property type="project" value="UniProtKB-UniRule"/>
</dbReference>
<dbReference type="CDD" id="cd07304">
    <property type="entry name" value="Chorismate_synthase"/>
    <property type="match status" value="1"/>
</dbReference>
<dbReference type="FunFam" id="3.60.150.10:FF:000002">
    <property type="entry name" value="Chorismate synthase"/>
    <property type="match status" value="1"/>
</dbReference>
<dbReference type="Gene3D" id="3.60.150.10">
    <property type="entry name" value="Chorismate synthase AroC"/>
    <property type="match status" value="1"/>
</dbReference>
<dbReference type="HAMAP" id="MF_00300">
    <property type="entry name" value="Chorismate_synth"/>
    <property type="match status" value="1"/>
</dbReference>
<dbReference type="InterPro" id="IPR000453">
    <property type="entry name" value="Chorismate_synth"/>
</dbReference>
<dbReference type="InterPro" id="IPR035904">
    <property type="entry name" value="Chorismate_synth_AroC_sf"/>
</dbReference>
<dbReference type="InterPro" id="IPR020541">
    <property type="entry name" value="Chorismate_synthase_CS"/>
</dbReference>
<dbReference type="NCBIfam" id="TIGR00033">
    <property type="entry name" value="aroC"/>
    <property type="match status" value="1"/>
</dbReference>
<dbReference type="NCBIfam" id="NF003793">
    <property type="entry name" value="PRK05382.1"/>
    <property type="match status" value="1"/>
</dbReference>
<dbReference type="PANTHER" id="PTHR21085">
    <property type="entry name" value="CHORISMATE SYNTHASE"/>
    <property type="match status" value="1"/>
</dbReference>
<dbReference type="PANTHER" id="PTHR21085:SF0">
    <property type="entry name" value="CHORISMATE SYNTHASE"/>
    <property type="match status" value="1"/>
</dbReference>
<dbReference type="Pfam" id="PF01264">
    <property type="entry name" value="Chorismate_synt"/>
    <property type="match status" value="1"/>
</dbReference>
<dbReference type="PIRSF" id="PIRSF001456">
    <property type="entry name" value="Chorismate_synth"/>
    <property type="match status" value="1"/>
</dbReference>
<dbReference type="SUPFAM" id="SSF103263">
    <property type="entry name" value="Chorismate synthase, AroC"/>
    <property type="match status" value="1"/>
</dbReference>
<dbReference type="PROSITE" id="PS00787">
    <property type="entry name" value="CHORISMATE_SYNTHASE_1"/>
    <property type="match status" value="1"/>
</dbReference>
<dbReference type="PROSITE" id="PS00788">
    <property type="entry name" value="CHORISMATE_SYNTHASE_2"/>
    <property type="match status" value="1"/>
</dbReference>
<feature type="chain" id="PRO_1000204950" description="Chorismate synthase">
    <location>
        <begin position="1"/>
        <end position="367"/>
    </location>
</feature>
<feature type="binding site" evidence="1">
    <location>
        <position position="48"/>
    </location>
    <ligand>
        <name>NADP(+)</name>
        <dbReference type="ChEBI" id="CHEBI:58349"/>
    </ligand>
</feature>
<feature type="binding site" evidence="1">
    <location>
        <begin position="125"/>
        <end position="127"/>
    </location>
    <ligand>
        <name>FMN</name>
        <dbReference type="ChEBI" id="CHEBI:58210"/>
    </ligand>
</feature>
<feature type="binding site" evidence="1">
    <location>
        <position position="283"/>
    </location>
    <ligand>
        <name>FMN</name>
        <dbReference type="ChEBI" id="CHEBI:58210"/>
    </ligand>
</feature>
<feature type="binding site" evidence="1">
    <location>
        <begin position="298"/>
        <end position="302"/>
    </location>
    <ligand>
        <name>FMN</name>
        <dbReference type="ChEBI" id="CHEBI:58210"/>
    </ligand>
</feature>
<feature type="binding site" evidence="1">
    <location>
        <position position="324"/>
    </location>
    <ligand>
        <name>FMN</name>
        <dbReference type="ChEBI" id="CHEBI:58210"/>
    </ligand>
</feature>
<organism>
    <name type="scientific">Agathobacter rectalis (strain ATCC 33656 / DSM 3377 / JCM 17463 / KCTC 5835 / VPI 0990)</name>
    <name type="common">Eubacterium rectale</name>
    <dbReference type="NCBI Taxonomy" id="515619"/>
    <lineage>
        <taxon>Bacteria</taxon>
        <taxon>Bacillati</taxon>
        <taxon>Bacillota</taxon>
        <taxon>Clostridia</taxon>
        <taxon>Lachnospirales</taxon>
        <taxon>Lachnospiraceae</taxon>
        <taxon>Agathobacter</taxon>
    </lineage>
</organism>